<comment type="miscellaneous">
    <text evidence="1">Present with 3230 molecules/cell in log phase SD medium.</text>
</comment>
<proteinExistence type="evidence at protein level"/>
<evidence type="ECO:0000269" key="1">
    <source>
    </source>
</evidence>
<reference key="1">
    <citation type="journal article" date="1998" name="Yeast">
        <title>A 9359 bp fragment from the right arm of Saccharomyces cerevisiae chromosome VII includes the FOL2 and YTA7 genes and three unknown open reading frames.</title>
        <authorList>
            <person name="Agostoni Carbone M.L."/>
            <person name="Lucchini G."/>
            <person name="Melchioretto P."/>
            <person name="Nardese V."/>
            <person name="Vanoni M."/>
            <person name="Panzeri L."/>
        </authorList>
    </citation>
    <scope>NUCLEOTIDE SEQUENCE [GENOMIC DNA]</scope>
    <source>
        <strain>ATCC 96604 / S288c / FY1679</strain>
    </source>
</reference>
<reference key="2">
    <citation type="journal article" date="1997" name="Nature">
        <title>The nucleotide sequence of Saccharomyces cerevisiae chromosome VII.</title>
        <authorList>
            <person name="Tettelin H."/>
            <person name="Agostoni-Carbone M.L."/>
            <person name="Albermann K."/>
            <person name="Albers M."/>
            <person name="Arroyo J."/>
            <person name="Backes U."/>
            <person name="Barreiros T."/>
            <person name="Bertani I."/>
            <person name="Bjourson A.J."/>
            <person name="Brueckner M."/>
            <person name="Bruschi C.V."/>
            <person name="Carignani G."/>
            <person name="Castagnoli L."/>
            <person name="Cerdan E."/>
            <person name="Clemente M.L."/>
            <person name="Coblenz A."/>
            <person name="Coglievina M."/>
            <person name="Coissac E."/>
            <person name="Defoor E."/>
            <person name="Del Bino S."/>
            <person name="Delius H."/>
            <person name="Delneri D."/>
            <person name="de Wergifosse P."/>
            <person name="Dujon B."/>
            <person name="Durand P."/>
            <person name="Entian K.-D."/>
            <person name="Eraso P."/>
            <person name="Escribano V."/>
            <person name="Fabiani L."/>
            <person name="Fartmann B."/>
            <person name="Feroli F."/>
            <person name="Feuermann M."/>
            <person name="Frontali L."/>
            <person name="Garcia-Gonzalez M."/>
            <person name="Garcia-Saez M.I."/>
            <person name="Goffeau A."/>
            <person name="Guerreiro P."/>
            <person name="Hani J."/>
            <person name="Hansen M."/>
            <person name="Hebling U."/>
            <person name="Hernandez K."/>
            <person name="Heumann K."/>
            <person name="Hilger F."/>
            <person name="Hofmann B."/>
            <person name="Indge K.J."/>
            <person name="James C.M."/>
            <person name="Klima R."/>
            <person name="Koetter P."/>
            <person name="Kramer B."/>
            <person name="Kramer W."/>
            <person name="Lauquin G."/>
            <person name="Leuther H."/>
            <person name="Louis E.J."/>
            <person name="Maillier E."/>
            <person name="Marconi A."/>
            <person name="Martegani E."/>
            <person name="Mazon M.J."/>
            <person name="Mazzoni C."/>
            <person name="McReynolds A.D.K."/>
            <person name="Melchioretto P."/>
            <person name="Mewes H.-W."/>
            <person name="Minenkova O."/>
            <person name="Mueller-Auer S."/>
            <person name="Nawrocki A."/>
            <person name="Netter P."/>
            <person name="Neu R."/>
            <person name="Nombela C."/>
            <person name="Oliver S.G."/>
            <person name="Panzeri L."/>
            <person name="Paoluzi S."/>
            <person name="Plevani P."/>
            <person name="Portetelle D."/>
            <person name="Portillo F."/>
            <person name="Potier S."/>
            <person name="Purnelle B."/>
            <person name="Rieger M."/>
            <person name="Riles L."/>
            <person name="Rinaldi T."/>
            <person name="Robben J."/>
            <person name="Rodrigues-Pousada C."/>
            <person name="Rodriguez-Belmonte E."/>
            <person name="Rodriguez-Torres A.M."/>
            <person name="Rose M."/>
            <person name="Ruzzi M."/>
            <person name="Saliola M."/>
            <person name="Sanchez-Perez M."/>
            <person name="Schaefer B."/>
            <person name="Schaefer M."/>
            <person name="Scharfe M."/>
            <person name="Schmidheini T."/>
            <person name="Schreer A."/>
            <person name="Skala J."/>
            <person name="Souciet J.-L."/>
            <person name="Steensma H.Y."/>
            <person name="Talla E."/>
            <person name="Thierry A."/>
            <person name="Vandenbol M."/>
            <person name="van der Aart Q.J.M."/>
            <person name="Van Dyck L."/>
            <person name="Vanoni M."/>
            <person name="Verhasselt P."/>
            <person name="Voet M."/>
            <person name="Volckaert G."/>
            <person name="Wambutt R."/>
            <person name="Watson M.D."/>
            <person name="Weber N."/>
            <person name="Wedler E."/>
            <person name="Wedler H."/>
            <person name="Wipfli P."/>
            <person name="Wolf K."/>
            <person name="Wright L.F."/>
            <person name="Zaccaria P."/>
            <person name="Zimmermann M."/>
            <person name="Zollner A."/>
            <person name="Kleine K."/>
        </authorList>
    </citation>
    <scope>NUCLEOTIDE SEQUENCE [LARGE SCALE GENOMIC DNA]</scope>
    <source>
        <strain>ATCC 204508 / S288c</strain>
    </source>
</reference>
<reference key="3">
    <citation type="journal article" date="2014" name="G3 (Bethesda)">
        <title>The reference genome sequence of Saccharomyces cerevisiae: Then and now.</title>
        <authorList>
            <person name="Engel S.R."/>
            <person name="Dietrich F.S."/>
            <person name="Fisk D.G."/>
            <person name="Binkley G."/>
            <person name="Balakrishnan R."/>
            <person name="Costanzo M.C."/>
            <person name="Dwight S.S."/>
            <person name="Hitz B.C."/>
            <person name="Karra K."/>
            <person name="Nash R.S."/>
            <person name="Weng S."/>
            <person name="Wong E.D."/>
            <person name="Lloyd P."/>
            <person name="Skrzypek M.S."/>
            <person name="Miyasato S.R."/>
            <person name="Simison M."/>
            <person name="Cherry J.M."/>
        </authorList>
    </citation>
    <scope>GENOME REANNOTATION</scope>
    <source>
        <strain>ATCC 204508 / S288c</strain>
    </source>
</reference>
<reference key="4">
    <citation type="journal article" date="2003" name="Nature">
        <title>Global analysis of protein expression in yeast.</title>
        <authorList>
            <person name="Ghaemmaghami S."/>
            <person name="Huh W.-K."/>
            <person name="Bower K."/>
            <person name="Howson R.W."/>
            <person name="Belle A."/>
            <person name="Dephoure N."/>
            <person name="O'Shea E.K."/>
            <person name="Weissman J.S."/>
        </authorList>
    </citation>
    <scope>LEVEL OF PROTEIN EXPRESSION [LARGE SCALE ANALYSIS]</scope>
</reference>
<reference key="5">
    <citation type="journal article" date="2009" name="Science">
        <title>Global analysis of Cdk1 substrate phosphorylation sites provides insights into evolution.</title>
        <authorList>
            <person name="Holt L.J."/>
            <person name="Tuch B.B."/>
            <person name="Villen J."/>
            <person name="Johnson A.D."/>
            <person name="Gygi S.P."/>
            <person name="Morgan D.O."/>
        </authorList>
    </citation>
    <scope>IDENTIFICATION BY MASS SPECTROMETRY [LARGE SCALE ANALYSIS]</scope>
</reference>
<sequence>MHATNWFDDWNPEALYRDDVTGCDDCSETSPIPKSGIICGPILRLINMDFKEKTYEGSIMVVVRGEENFPKITYQLGPSLPSEDEDIEVNEAFFEGKLFHKDILKDDNIWFYRYEIKLPMSNYEQMVKYAVDGTMEPHYRFFVPSFTQNSNVISYSCNGFSLSVDTSKFKGSLWYDVLKKHRYVHYHAILGGGDQIYSDNIKLHAPNLKAWLETKDPIKKYNTQTTEETKEQIRQFYLEHYLNWYGYGHWYGSTPKSKTTQKCFVKSLACIPAINVWDDHDIIDGYGSYNDSFMKTENFLTVGRMAYRYYMLFQQHVSASKQDGDEYAYLKSKQWILGNEKGSSYIGERSHSIFSWLGPKMAMLGLDCRTERKLHEIFSERSYSLIWERVEREIKNLKGGHLLLMLGIPIAYPRLVWLEWLFTSKLLAPIKYLSKKGIFASGFVNEFNGDVELLDDLNDHWCARHHKKERNYLIMKLQDIGAKYGVRITILSGDVHLASVGRFRAKIHRHHLIMSEEKEKENTRIIEEPTKDVRLIFNIIASAIVNTPPPDAMATLLQKRCRLHHFDLETDEDAVPIFAKEVDGVHKRKESCFMNKRNWSDIIPIENLLNNPQLSKELGVKVGDIVIPGIITEQQKLQKLENDDQINSYPVTSGGLFTTIHVERDANQTNSQTVSYCLPIPELTVTCERLSHKGIKHLNIT</sequence>
<keyword id="KW-1185">Reference proteome</keyword>
<protein>
    <recommendedName>
        <fullName>Uncharacterized protein YGR266W</fullName>
    </recommendedName>
</protein>
<dbReference type="EMBL" id="Y07893">
    <property type="protein sequence ID" value="CAA69197.1"/>
    <property type="molecule type" value="Genomic_DNA"/>
</dbReference>
<dbReference type="EMBL" id="Z73051">
    <property type="protein sequence ID" value="CAA97296.1"/>
    <property type="molecule type" value="Genomic_DNA"/>
</dbReference>
<dbReference type="EMBL" id="BK006941">
    <property type="protein sequence ID" value="DAA08355.1"/>
    <property type="molecule type" value="Genomic_DNA"/>
</dbReference>
<dbReference type="PIR" id="S64599">
    <property type="entry name" value="S64599"/>
</dbReference>
<dbReference type="RefSeq" id="NP_011782.1">
    <property type="nucleotide sequence ID" value="NM_001181395.1"/>
</dbReference>
<dbReference type="BioGRID" id="33516">
    <property type="interactions" value="63"/>
</dbReference>
<dbReference type="DIP" id="DIP-6585N"/>
<dbReference type="FunCoup" id="P53326">
    <property type="interactions" value="105"/>
</dbReference>
<dbReference type="IntAct" id="P53326">
    <property type="interactions" value="9"/>
</dbReference>
<dbReference type="MINT" id="P53326"/>
<dbReference type="STRING" id="4932.YGR266W"/>
<dbReference type="iPTMnet" id="P53326"/>
<dbReference type="PaxDb" id="4932-YGR266W"/>
<dbReference type="PeptideAtlas" id="P53326"/>
<dbReference type="EnsemblFungi" id="YGR266W_mRNA">
    <property type="protein sequence ID" value="YGR266W"/>
    <property type="gene ID" value="YGR266W"/>
</dbReference>
<dbReference type="GeneID" id="853182"/>
<dbReference type="KEGG" id="sce:YGR266W"/>
<dbReference type="AGR" id="SGD:S000003498"/>
<dbReference type="SGD" id="S000003498">
    <property type="gene designation" value="YGR266W"/>
</dbReference>
<dbReference type="VEuPathDB" id="FungiDB:YGR266W"/>
<dbReference type="eggNOG" id="ENOG502QPI0">
    <property type="taxonomic scope" value="Eukaryota"/>
</dbReference>
<dbReference type="HOGENOM" id="CLU_000998_3_0_1"/>
<dbReference type="InParanoid" id="P53326"/>
<dbReference type="OMA" id="GPNLWND"/>
<dbReference type="OrthoDB" id="2419400at2759"/>
<dbReference type="BioCyc" id="YEAST:G3O-30934-MONOMER"/>
<dbReference type="BioGRID-ORCS" id="853182">
    <property type="hits" value="6 hits in 10 CRISPR screens"/>
</dbReference>
<dbReference type="PRO" id="PR:P53326"/>
<dbReference type="Proteomes" id="UP000002311">
    <property type="component" value="Chromosome VII"/>
</dbReference>
<dbReference type="RNAct" id="P53326">
    <property type="molecule type" value="protein"/>
</dbReference>
<dbReference type="GO" id="GO:0016020">
    <property type="term" value="C:membrane"/>
    <property type="evidence" value="ECO:0000318"/>
    <property type="project" value="GO_Central"/>
</dbReference>
<dbReference type="GO" id="GO:0005741">
    <property type="term" value="C:mitochondrial outer membrane"/>
    <property type="evidence" value="ECO:0007005"/>
    <property type="project" value="SGD"/>
</dbReference>
<dbReference type="GO" id="GO:0005739">
    <property type="term" value="C:mitochondrion"/>
    <property type="evidence" value="ECO:0007005"/>
    <property type="project" value="SGD"/>
</dbReference>
<dbReference type="GO" id="GO:0005886">
    <property type="term" value="C:plasma membrane"/>
    <property type="evidence" value="ECO:0000314"/>
    <property type="project" value="SGD"/>
</dbReference>
<dbReference type="GO" id="GO:0005628">
    <property type="term" value="C:prospore membrane"/>
    <property type="evidence" value="ECO:0007005"/>
    <property type="project" value="SGD"/>
</dbReference>
<dbReference type="CDD" id="cd07389">
    <property type="entry name" value="MPP_PhoD"/>
    <property type="match status" value="1"/>
</dbReference>
<dbReference type="Gene3D" id="3.60.21.70">
    <property type="entry name" value="PhoD-like phosphatase"/>
    <property type="match status" value="1"/>
</dbReference>
<dbReference type="InterPro" id="IPR018946">
    <property type="entry name" value="PhoD-like_MPP"/>
</dbReference>
<dbReference type="InterPro" id="IPR038607">
    <property type="entry name" value="PhoD-like_sf"/>
</dbReference>
<dbReference type="InterPro" id="IPR043904">
    <property type="entry name" value="PhoD_2-like"/>
</dbReference>
<dbReference type="PANTHER" id="PTHR46689">
    <property type="entry name" value="MEMBRANE PROTEIN, PUTATIVE-RELATED"/>
    <property type="match status" value="1"/>
</dbReference>
<dbReference type="PANTHER" id="PTHR46689:SF1">
    <property type="entry name" value="PHOD-LIKE PHOSPHATASE DOMAIN-CONTAINING PROTEIN"/>
    <property type="match status" value="1"/>
</dbReference>
<dbReference type="Pfam" id="PF19050">
    <property type="entry name" value="PhoD_2"/>
    <property type="match status" value="2"/>
</dbReference>
<name>YG5L_YEAST</name>
<organism>
    <name type="scientific">Saccharomyces cerevisiae (strain ATCC 204508 / S288c)</name>
    <name type="common">Baker's yeast</name>
    <dbReference type="NCBI Taxonomy" id="559292"/>
    <lineage>
        <taxon>Eukaryota</taxon>
        <taxon>Fungi</taxon>
        <taxon>Dikarya</taxon>
        <taxon>Ascomycota</taxon>
        <taxon>Saccharomycotina</taxon>
        <taxon>Saccharomycetes</taxon>
        <taxon>Saccharomycetales</taxon>
        <taxon>Saccharomycetaceae</taxon>
        <taxon>Saccharomyces</taxon>
    </lineage>
</organism>
<feature type="chain" id="PRO_0000202864" description="Uncharacterized protein YGR266W">
    <location>
        <begin position="1"/>
        <end position="701"/>
    </location>
</feature>
<gene>
    <name type="ordered locus">YGR266W</name>
</gene>
<accession>P53326</accession>
<accession>D6VV44</accession>